<feature type="chain" id="PRO_0000074736" description="Sensor histidine kinase ComP">
    <location>
        <begin position="1"/>
        <end position="769"/>
    </location>
</feature>
<feature type="topological domain" description="Cytoplasmic" evidence="1">
    <location>
        <begin position="1"/>
        <end position="9"/>
    </location>
</feature>
<feature type="transmembrane region" description="Helical" evidence="1">
    <location>
        <begin position="10"/>
        <end position="33"/>
    </location>
</feature>
<feature type="topological domain" description="Extracellular" evidence="1">
    <location>
        <begin position="34"/>
        <end position="113"/>
    </location>
</feature>
<feature type="transmembrane region" description="Helical" evidence="1">
    <location>
        <begin position="114"/>
        <end position="134"/>
    </location>
</feature>
<feature type="topological domain" description="Cytoplasmic" evidence="1">
    <location>
        <begin position="135"/>
        <end position="144"/>
    </location>
</feature>
<feature type="transmembrane region" description="Helical" evidence="1">
    <location>
        <begin position="145"/>
        <end position="167"/>
    </location>
</feature>
<feature type="topological domain" description="Extracellular" evidence="1">
    <location>
        <begin position="168"/>
        <end position="235"/>
    </location>
</feature>
<feature type="transmembrane region" description="Helical" evidence="1">
    <location>
        <begin position="236"/>
        <end position="257"/>
    </location>
</feature>
<feature type="topological domain" description="Cytoplasmic" evidence="1">
    <location>
        <begin position="258"/>
        <end position="272"/>
    </location>
</feature>
<feature type="transmembrane region" description="Helical" evidence="1">
    <location>
        <begin position="273"/>
        <end position="295"/>
    </location>
</feature>
<feature type="topological domain" description="Extracellular" evidence="1">
    <location>
        <begin position="296"/>
        <end position="299"/>
    </location>
</feature>
<feature type="transmembrane region" description="Helical" evidence="1">
    <location>
        <begin position="300"/>
        <end position="323"/>
    </location>
</feature>
<feature type="topological domain" description="Cytoplasmic" evidence="1">
    <location>
        <begin position="324"/>
        <end position="337"/>
    </location>
</feature>
<feature type="transmembrane region" description="Helical" evidence="1">
    <location>
        <begin position="338"/>
        <end position="357"/>
    </location>
</feature>
<feature type="topological domain" description="Extracellular" evidence="1">
    <location>
        <begin position="358"/>
        <end position="361"/>
    </location>
</feature>
<feature type="transmembrane region" description="Helical" evidence="1">
    <location>
        <begin position="362"/>
        <end position="383"/>
    </location>
</feature>
<feature type="topological domain" description="Cytoplasmic" evidence="1">
    <location>
        <begin position="384"/>
        <end position="769"/>
    </location>
</feature>
<feature type="domain" description="Histidine kinase" evidence="2">
    <location>
        <begin position="571"/>
        <end position="769"/>
    </location>
</feature>
<feature type="modified residue" description="Phosphohistidine; by autocatalysis" evidence="2">
    <location>
        <position position="576"/>
    </location>
</feature>
<feature type="sequence conflict" description="In Ref. 1; CAA37957/AAA22319 and 2; CAB07903." evidence="4" ref="1 2">
    <original>G</original>
    <variation>A</variation>
    <location>
        <position position="64"/>
    </location>
</feature>
<feature type="sequence conflict" description="In Ref. 2; CAB07903." evidence="4" ref="2">
    <original>C</original>
    <variation>S</variation>
    <location>
        <position position="604"/>
    </location>
</feature>
<feature type="sequence conflict" description="In Ref. 1; CAA37957/AAA22319." evidence="4" ref="1">
    <original>D</original>
    <variation>Y</variation>
    <location>
        <position position="610"/>
    </location>
</feature>
<feature type="sequence conflict" description="In Ref. 1; CAA37957/AAA22319." evidence="4" ref="1">
    <original>E</original>
    <variation>G</variation>
    <location>
        <position position="628"/>
    </location>
</feature>
<feature type="sequence conflict" description="In Ref. 1; CAA37957/AAA22319." evidence="4" ref="1">
    <original>QL</original>
    <variation>PV</variation>
    <location>
        <begin position="636"/>
        <end position="637"/>
    </location>
</feature>
<feature type="sequence conflict" description="In Ref. 1; CAA37957/AAA22319 and 2; CAB07903." evidence="4" ref="1 2">
    <original>QQ</original>
    <variation>HE</variation>
    <location>
        <begin position="653"/>
        <end position="654"/>
    </location>
</feature>
<gene>
    <name type="primary">comP</name>
    <name type="ordered locus">BSU31690</name>
</gene>
<sequence>MKNLIKKFTIAVIVLSILYISYTTYISMNGIIIGTKIHKNDKSQFMIEEISESSYGQFVGLRQGDIILKINKEKPSDKHLKWGYLSHINSLDILRSGKKIHLKDFDLVTLNRPYSFFLFVLPLFFYFLSIICIFYILKVNKKRRSFAAYILILLLLDISIAYISAGGPFRGHIINRYINLFTFISSPILYLQFIQRYLGEIGKTFLNRISFLYIIPIFNLGIEFFQDYLQVDIDFLATLNLVSFATLTLFSFSAIYLHLNKYKYAEHSFILKLLILTNTLSFAPFLIFFVLPIIFTGNYIFPALASASLLVLIPFGLVYQFVANKMFDIEFILGRMRYYALLAMIPTLLIVGALVLFDVMDIQMNPVRQTVFFFVVMFAVFYFKEVMDFKFRLKRFSEKFNYQDSIFKYTQLMRGVTSLQQVFKELKNTILDVLLVSKAYTFEVTPDHKVIFLDKHEVGPDWNFYQEEFENVTSEIGKIIEVNQGFLMKVGERGGSSYVLLCLSNINTPRLTRDEISWLKTLSFYTSVSMENVLHIEELMEHLKDLKQEGTNPIWLKKLMFAIEEKQRSGLARDLHDSVLQDLISLKRQCELFLGDFKKDDNPCREEVQDKLVQMNEQMSDVISMTRETCHELRPQLLYDLGLVKALSKLVAQQQERVPFHIRLNTGRFTASLDLDSQLNLYRIIQEFLSNAVKHSQATDVLIMLISIQNKIVLHYEDDGVGFDQEKNTEHSMSMGLSGIKERVRALDGRLRIETSEGKGFKADIEIEL</sequence>
<evidence type="ECO:0000255" key="1"/>
<evidence type="ECO:0000255" key="2">
    <source>
        <dbReference type="PROSITE-ProRule" id="PRU00107"/>
    </source>
</evidence>
<evidence type="ECO:0000269" key="3">
    <source>
    </source>
</evidence>
<evidence type="ECO:0000305" key="4"/>
<dbReference type="EC" id="2.7.13.3"/>
<dbReference type="EMBL" id="X54010">
    <property type="protein sequence ID" value="CAA37957.1"/>
    <property type="molecule type" value="mRNA"/>
</dbReference>
<dbReference type="EMBL" id="AH000865">
    <property type="protein sequence ID" value="AAA22319.1"/>
    <property type="molecule type" value="Genomic_DNA"/>
</dbReference>
<dbReference type="EMBL" id="Z93932">
    <property type="protein sequence ID" value="CAB07903.1"/>
    <property type="molecule type" value="Genomic_DNA"/>
</dbReference>
<dbReference type="EMBL" id="AL009126">
    <property type="protein sequence ID" value="CAB15157.2"/>
    <property type="molecule type" value="Genomic_DNA"/>
</dbReference>
<dbReference type="EMBL" id="M71283">
    <property type="protein sequence ID" value="AAA22324.1"/>
    <property type="molecule type" value="Genomic_DNA"/>
</dbReference>
<dbReference type="PIR" id="A35848">
    <property type="entry name" value="A35848"/>
</dbReference>
<dbReference type="PIR" id="B69604">
    <property type="entry name" value="B69604"/>
</dbReference>
<dbReference type="RefSeq" id="NP_391047.2">
    <property type="nucleotide sequence ID" value="NC_000964.3"/>
</dbReference>
<dbReference type="RefSeq" id="WP_003242894.1">
    <property type="nucleotide sequence ID" value="NZ_OZ025638.1"/>
</dbReference>
<dbReference type="SMR" id="Q99027"/>
<dbReference type="FunCoup" id="Q99027">
    <property type="interactions" value="176"/>
</dbReference>
<dbReference type="STRING" id="224308.BSU31690"/>
<dbReference type="PaxDb" id="224308-BSU31690"/>
<dbReference type="EnsemblBacteria" id="CAB15157">
    <property type="protein sequence ID" value="CAB15157"/>
    <property type="gene ID" value="BSU_31690"/>
</dbReference>
<dbReference type="GeneID" id="938866"/>
<dbReference type="KEGG" id="bsu:BSU31690"/>
<dbReference type="PATRIC" id="fig|224308.179.peg.3434"/>
<dbReference type="eggNOG" id="COG4585">
    <property type="taxonomic scope" value="Bacteria"/>
</dbReference>
<dbReference type="InParanoid" id="Q99027"/>
<dbReference type="OrthoDB" id="9781904at2"/>
<dbReference type="BioCyc" id="BSUB:BSU31690-MONOMER"/>
<dbReference type="Proteomes" id="UP000001570">
    <property type="component" value="Chromosome"/>
</dbReference>
<dbReference type="GO" id="GO:0005886">
    <property type="term" value="C:plasma membrane"/>
    <property type="evidence" value="ECO:0000318"/>
    <property type="project" value="GO_Central"/>
</dbReference>
<dbReference type="GO" id="GO:0005524">
    <property type="term" value="F:ATP binding"/>
    <property type="evidence" value="ECO:0007669"/>
    <property type="project" value="UniProtKB-KW"/>
</dbReference>
<dbReference type="GO" id="GO:0000155">
    <property type="term" value="F:phosphorelay sensor kinase activity"/>
    <property type="evidence" value="ECO:0007669"/>
    <property type="project" value="InterPro"/>
</dbReference>
<dbReference type="GO" id="GO:0046983">
    <property type="term" value="F:protein dimerization activity"/>
    <property type="evidence" value="ECO:0007669"/>
    <property type="project" value="InterPro"/>
</dbReference>
<dbReference type="GO" id="GO:0004672">
    <property type="term" value="F:protein kinase activity"/>
    <property type="evidence" value="ECO:0000318"/>
    <property type="project" value="GO_Central"/>
</dbReference>
<dbReference type="GO" id="GO:0030420">
    <property type="term" value="P:establishment of competence for transformation"/>
    <property type="evidence" value="ECO:0007669"/>
    <property type="project" value="UniProtKB-KW"/>
</dbReference>
<dbReference type="GO" id="GO:0030435">
    <property type="term" value="P:sporulation resulting in formation of a cellular spore"/>
    <property type="evidence" value="ECO:0007669"/>
    <property type="project" value="UniProtKB-KW"/>
</dbReference>
<dbReference type="CDD" id="cd16917">
    <property type="entry name" value="HATPase_UhpB-NarQ-NarX-like"/>
    <property type="match status" value="1"/>
</dbReference>
<dbReference type="Gene3D" id="1.20.5.1930">
    <property type="match status" value="1"/>
</dbReference>
<dbReference type="Gene3D" id="3.30.565.10">
    <property type="entry name" value="Histidine kinase-like ATPase, C-terminal domain"/>
    <property type="match status" value="1"/>
</dbReference>
<dbReference type="InterPro" id="IPR036890">
    <property type="entry name" value="HATPase_C_sf"/>
</dbReference>
<dbReference type="InterPro" id="IPR005467">
    <property type="entry name" value="His_kinase_dom"/>
</dbReference>
<dbReference type="InterPro" id="IPR050482">
    <property type="entry name" value="Sensor_HK_TwoCompSys"/>
</dbReference>
<dbReference type="InterPro" id="IPR011712">
    <property type="entry name" value="Sig_transdc_His_kin_sub3_dim/P"/>
</dbReference>
<dbReference type="PANTHER" id="PTHR24421">
    <property type="entry name" value="NITRATE/NITRITE SENSOR PROTEIN NARX-RELATED"/>
    <property type="match status" value="1"/>
</dbReference>
<dbReference type="PANTHER" id="PTHR24421:SF60">
    <property type="entry name" value="SENSOR HISTIDINE KINASE COMP"/>
    <property type="match status" value="1"/>
</dbReference>
<dbReference type="Pfam" id="PF02518">
    <property type="entry name" value="HATPase_c"/>
    <property type="match status" value="1"/>
</dbReference>
<dbReference type="Pfam" id="PF07730">
    <property type="entry name" value="HisKA_3"/>
    <property type="match status" value="1"/>
</dbReference>
<dbReference type="SMART" id="SM00387">
    <property type="entry name" value="HATPase_c"/>
    <property type="match status" value="1"/>
</dbReference>
<dbReference type="SUPFAM" id="SSF55874">
    <property type="entry name" value="ATPase domain of HSP90 chaperone/DNA topoisomerase II/histidine kinase"/>
    <property type="match status" value="1"/>
</dbReference>
<dbReference type="PROSITE" id="PS50109">
    <property type="entry name" value="HIS_KIN"/>
    <property type="match status" value="1"/>
</dbReference>
<reference key="1">
    <citation type="journal article" date="1990" name="Genes Dev.">
        <title>A Bacillus subtilis regulatory gene product for genetic competence and sporulation resembles sensor protein members of the bacterial two-component signal-transduction systems.</title>
        <authorList>
            <person name="Weinrauch Y."/>
            <person name="Penchev R."/>
            <person name="Dubnau E."/>
            <person name="Smith I."/>
            <person name="Dubnau D."/>
        </authorList>
    </citation>
    <scope>NUCLEOTIDE SEQUENCE [GENOMIC DNA]</scope>
    <source>
        <strain>BD630</strain>
    </source>
</reference>
<reference key="2">
    <citation type="journal article" date="1997" name="Microbiology">
        <title>Analysis of the Bacillus subtilis genome: cloning and nucleotide sequence of a 62 kb region between 275 degrees (rrnB) and 284 degrees (pai).</title>
        <authorList>
            <person name="Oudega B."/>
            <person name="Koningstein G."/>
            <person name="Rodrigues L."/>
            <person name="de Sales Ramon M."/>
            <person name="Hilbert H."/>
            <person name="Duesterhoeft A."/>
            <person name="Pohl T.M."/>
            <person name="Weitzenegger T."/>
        </authorList>
    </citation>
    <scope>NUCLEOTIDE SEQUENCE [GENOMIC DNA]</scope>
    <source>
        <strain>168</strain>
    </source>
</reference>
<reference key="3">
    <citation type="journal article" date="1997" name="Nature">
        <title>The complete genome sequence of the Gram-positive bacterium Bacillus subtilis.</title>
        <authorList>
            <person name="Kunst F."/>
            <person name="Ogasawara N."/>
            <person name="Moszer I."/>
            <person name="Albertini A.M."/>
            <person name="Alloni G."/>
            <person name="Azevedo V."/>
            <person name="Bertero M.G."/>
            <person name="Bessieres P."/>
            <person name="Bolotin A."/>
            <person name="Borchert S."/>
            <person name="Borriss R."/>
            <person name="Boursier L."/>
            <person name="Brans A."/>
            <person name="Braun M."/>
            <person name="Brignell S.C."/>
            <person name="Bron S."/>
            <person name="Brouillet S."/>
            <person name="Bruschi C.V."/>
            <person name="Caldwell B."/>
            <person name="Capuano V."/>
            <person name="Carter N.M."/>
            <person name="Choi S.-K."/>
            <person name="Codani J.-J."/>
            <person name="Connerton I.F."/>
            <person name="Cummings N.J."/>
            <person name="Daniel R.A."/>
            <person name="Denizot F."/>
            <person name="Devine K.M."/>
            <person name="Duesterhoeft A."/>
            <person name="Ehrlich S.D."/>
            <person name="Emmerson P.T."/>
            <person name="Entian K.-D."/>
            <person name="Errington J."/>
            <person name="Fabret C."/>
            <person name="Ferrari E."/>
            <person name="Foulger D."/>
            <person name="Fritz C."/>
            <person name="Fujita M."/>
            <person name="Fujita Y."/>
            <person name="Fuma S."/>
            <person name="Galizzi A."/>
            <person name="Galleron N."/>
            <person name="Ghim S.-Y."/>
            <person name="Glaser P."/>
            <person name="Goffeau A."/>
            <person name="Golightly E.J."/>
            <person name="Grandi G."/>
            <person name="Guiseppi G."/>
            <person name="Guy B.J."/>
            <person name="Haga K."/>
            <person name="Haiech J."/>
            <person name="Harwood C.R."/>
            <person name="Henaut A."/>
            <person name="Hilbert H."/>
            <person name="Holsappel S."/>
            <person name="Hosono S."/>
            <person name="Hullo M.-F."/>
            <person name="Itaya M."/>
            <person name="Jones L.-M."/>
            <person name="Joris B."/>
            <person name="Karamata D."/>
            <person name="Kasahara Y."/>
            <person name="Klaerr-Blanchard M."/>
            <person name="Klein C."/>
            <person name="Kobayashi Y."/>
            <person name="Koetter P."/>
            <person name="Koningstein G."/>
            <person name="Krogh S."/>
            <person name="Kumano M."/>
            <person name="Kurita K."/>
            <person name="Lapidus A."/>
            <person name="Lardinois S."/>
            <person name="Lauber J."/>
            <person name="Lazarevic V."/>
            <person name="Lee S.-M."/>
            <person name="Levine A."/>
            <person name="Liu H."/>
            <person name="Masuda S."/>
            <person name="Mauel C."/>
            <person name="Medigue C."/>
            <person name="Medina N."/>
            <person name="Mellado R.P."/>
            <person name="Mizuno M."/>
            <person name="Moestl D."/>
            <person name="Nakai S."/>
            <person name="Noback M."/>
            <person name="Noone D."/>
            <person name="O'Reilly M."/>
            <person name="Ogawa K."/>
            <person name="Ogiwara A."/>
            <person name="Oudega B."/>
            <person name="Park S.-H."/>
            <person name="Parro V."/>
            <person name="Pohl T.M."/>
            <person name="Portetelle D."/>
            <person name="Porwollik S."/>
            <person name="Prescott A.M."/>
            <person name="Presecan E."/>
            <person name="Pujic P."/>
            <person name="Purnelle B."/>
            <person name="Rapoport G."/>
            <person name="Rey M."/>
            <person name="Reynolds S."/>
            <person name="Rieger M."/>
            <person name="Rivolta C."/>
            <person name="Rocha E."/>
            <person name="Roche B."/>
            <person name="Rose M."/>
            <person name="Sadaie Y."/>
            <person name="Sato T."/>
            <person name="Scanlan E."/>
            <person name="Schleich S."/>
            <person name="Schroeter R."/>
            <person name="Scoffone F."/>
            <person name="Sekiguchi J."/>
            <person name="Sekowska A."/>
            <person name="Seror S.J."/>
            <person name="Serror P."/>
            <person name="Shin B.-S."/>
            <person name="Soldo B."/>
            <person name="Sorokin A."/>
            <person name="Tacconi E."/>
            <person name="Takagi T."/>
            <person name="Takahashi H."/>
            <person name="Takemaru K."/>
            <person name="Takeuchi M."/>
            <person name="Tamakoshi A."/>
            <person name="Tanaka T."/>
            <person name="Terpstra P."/>
            <person name="Tognoni A."/>
            <person name="Tosato V."/>
            <person name="Uchiyama S."/>
            <person name="Vandenbol M."/>
            <person name="Vannier F."/>
            <person name="Vassarotti A."/>
            <person name="Viari A."/>
            <person name="Wambutt R."/>
            <person name="Wedler E."/>
            <person name="Wedler H."/>
            <person name="Weitzenegger T."/>
            <person name="Winters P."/>
            <person name="Wipat A."/>
            <person name="Yamamoto H."/>
            <person name="Yamane K."/>
            <person name="Yasumoto K."/>
            <person name="Yata K."/>
            <person name="Yoshida K."/>
            <person name="Yoshikawa H.-F."/>
            <person name="Zumstein E."/>
            <person name="Yoshikawa H."/>
            <person name="Danchin A."/>
        </authorList>
    </citation>
    <scope>NUCLEOTIDE SEQUENCE [LARGE SCALE GENOMIC DNA]</scope>
    <source>
        <strain>168</strain>
    </source>
</reference>
<reference key="4">
    <citation type="journal article" date="2009" name="Microbiology">
        <title>From a consortium sequence to a unified sequence: the Bacillus subtilis 168 reference genome a decade later.</title>
        <authorList>
            <person name="Barbe V."/>
            <person name="Cruveiller S."/>
            <person name="Kunst F."/>
            <person name="Lenoble P."/>
            <person name="Meurice G."/>
            <person name="Sekowska A."/>
            <person name="Vallenet D."/>
            <person name="Wang T."/>
            <person name="Moszer I."/>
            <person name="Medigue C."/>
            <person name="Danchin A."/>
        </authorList>
    </citation>
    <scope>SEQUENCE REVISION TO 64; 604 AND 654</scope>
</reference>
<reference key="5">
    <citation type="journal article" date="1991" name="J. Bacteriol.">
        <title>Sequence and properties of comQ, a new competence regulatory gene of Bacillus subtilis.</title>
        <authorList>
            <person name="Weinrauch Y."/>
            <person name="Msadek T."/>
            <person name="Kunst F."/>
            <person name="Dubnau D."/>
        </authorList>
    </citation>
    <scope>NUCLEOTIDE SEQUENCE [GENOMIC DNA] OF 1-16</scope>
    <source>
        <strain>168</strain>
    </source>
</reference>
<reference key="6">
    <citation type="journal article" date="2001" name="J. Bacteriol.">
        <title>Specificity and genetic polymorphism of the Bacillus competence quorum-sensing system.</title>
        <authorList>
            <person name="Tortosa P."/>
            <person name="Logsdon L."/>
            <person name="Kraigher B."/>
            <person name="Itoh Y."/>
            <person name="Mandic-Mulec I."/>
            <person name="Dubnau D."/>
        </authorList>
    </citation>
    <scope>POLYMORPHISM IN COMX; COMQ AND COMP</scope>
</reference>
<reference key="7">
    <citation type="journal article" date="2005" name="Mol. Microbiol.">
        <title>Conservation of genes and processes controlled by the quorum response in bacteria: characterization of genes controlled by the quorum-sensing transcription factor ComA in Bacillus subtilis.</title>
        <authorList>
            <person name="Comella N."/>
            <person name="Grossman A.D."/>
        </authorList>
    </citation>
    <scope>FUNCTION</scope>
</reference>
<protein>
    <recommendedName>
        <fullName>Sensor histidine kinase ComP</fullName>
        <ecNumber>2.7.13.3</ecNumber>
    </recommendedName>
</protein>
<name>COMP_BACSU</name>
<proteinExistence type="evidence at transcript level"/>
<keyword id="KW-0067">ATP-binding</keyword>
<keyword id="KW-1003">Cell membrane</keyword>
<keyword id="KW-0178">Competence</keyword>
<keyword id="KW-0418">Kinase</keyword>
<keyword id="KW-0472">Membrane</keyword>
<keyword id="KW-0547">Nucleotide-binding</keyword>
<keyword id="KW-0597">Phosphoprotein</keyword>
<keyword id="KW-1185">Reference proteome</keyword>
<keyword id="KW-0749">Sporulation</keyword>
<keyword id="KW-0808">Transferase</keyword>
<keyword id="KW-0812">Transmembrane</keyword>
<keyword id="KW-1133">Transmembrane helix</keyword>
<keyword id="KW-0902">Two-component regulatory system</keyword>
<accession>Q99027</accession>
<accession>O05226</accession>
<comment type="function">
    <text evidence="3">Sensor in the two-component regulatory system ComP/ComA involved in a major quorum response pathway that regulates the development of genetic competence. Plays a role in sporulation, at least partly interchangeable with that of SpoIIJ. Probably activates ComA by phosphorylation.</text>
</comment>
<comment type="catalytic activity">
    <reaction>
        <text>ATP + protein L-histidine = ADP + protein N-phospho-L-histidine.</text>
        <dbReference type="EC" id="2.7.13.3"/>
    </reaction>
</comment>
<comment type="subcellular location">
    <subcellularLocation>
        <location>Cell membrane</location>
        <topology>Multi-pass membrane protein</topology>
    </subcellularLocation>
</comment>
<comment type="PTM">
    <text>Autophosphorylates on a histidine and transfers the phosphate group onto an aspartate in ComA, thus activating it.</text>
</comment>
<comment type="miscellaneous">
    <text>The DNA sequences encoding comQ, comX and the N-terminal two-thirds of comP show a striking polymorphism, which determines the specificity of the quorum-sensing system in the different pherotypes of Bacillus.</text>
</comment>
<organism>
    <name type="scientific">Bacillus subtilis (strain 168)</name>
    <dbReference type="NCBI Taxonomy" id="224308"/>
    <lineage>
        <taxon>Bacteria</taxon>
        <taxon>Bacillati</taxon>
        <taxon>Bacillota</taxon>
        <taxon>Bacilli</taxon>
        <taxon>Bacillales</taxon>
        <taxon>Bacillaceae</taxon>
        <taxon>Bacillus</taxon>
    </lineage>
</organism>